<proteinExistence type="evidence at protein level"/>
<dbReference type="EC" id="4.2.1.79" evidence="1 2"/>
<dbReference type="EC" id="4.2.1.3" evidence="1 2"/>
<dbReference type="EMBL" id="U73857">
    <property type="protein sequence ID" value="AAB18058.1"/>
    <property type="molecule type" value="Genomic_DNA"/>
</dbReference>
<dbReference type="EMBL" id="U00096">
    <property type="protein sequence ID" value="AAC73437.1"/>
    <property type="molecule type" value="Genomic_DNA"/>
</dbReference>
<dbReference type="EMBL" id="AP009048">
    <property type="protein sequence ID" value="BAE76116.1"/>
    <property type="molecule type" value="Genomic_DNA"/>
</dbReference>
<dbReference type="PIR" id="F64760">
    <property type="entry name" value="F64760"/>
</dbReference>
<dbReference type="RefSeq" id="NP_414868.1">
    <property type="nucleotide sequence ID" value="NC_000913.3"/>
</dbReference>
<dbReference type="RefSeq" id="WP_001275859.1">
    <property type="nucleotide sequence ID" value="NZ_LN832404.1"/>
</dbReference>
<dbReference type="PDB" id="1SZQ">
    <property type="method" value="X-ray"/>
    <property type="resolution" value="2.70 A"/>
    <property type="chains" value="A/B=1-483"/>
</dbReference>
<dbReference type="PDBsum" id="1SZQ"/>
<dbReference type="SMR" id="P77243"/>
<dbReference type="BioGRID" id="4259810">
    <property type="interactions" value="3"/>
</dbReference>
<dbReference type="DIP" id="DIP-10580N"/>
<dbReference type="FunCoup" id="P77243">
    <property type="interactions" value="387"/>
</dbReference>
<dbReference type="IntAct" id="P77243">
    <property type="interactions" value="4"/>
</dbReference>
<dbReference type="STRING" id="511145.b0334"/>
<dbReference type="jPOST" id="P77243"/>
<dbReference type="PaxDb" id="511145-b0334"/>
<dbReference type="DNASU" id="945931"/>
<dbReference type="EnsemblBacteria" id="AAC73437">
    <property type="protein sequence ID" value="AAC73437"/>
    <property type="gene ID" value="b0334"/>
</dbReference>
<dbReference type="GeneID" id="945931"/>
<dbReference type="KEGG" id="ecj:JW0325"/>
<dbReference type="KEGG" id="eco:b0334"/>
<dbReference type="KEGG" id="ecoc:C3026_01635"/>
<dbReference type="KEGG" id="ecoc:C3026_24805"/>
<dbReference type="PATRIC" id="fig|1411691.4.peg.1943"/>
<dbReference type="EchoBASE" id="EB3371"/>
<dbReference type="eggNOG" id="COG2079">
    <property type="taxonomic scope" value="Bacteria"/>
</dbReference>
<dbReference type="HOGENOM" id="CLU_021803_1_0_6"/>
<dbReference type="InParanoid" id="P77243"/>
<dbReference type="OMA" id="DHSVMYI"/>
<dbReference type="PhylomeDB" id="P77243"/>
<dbReference type="BioCyc" id="EcoCyc:G6199-MONOMER"/>
<dbReference type="BioCyc" id="MetaCyc:G6199-MONOMER"/>
<dbReference type="BRENDA" id="4.2.1.79">
    <property type="organism ID" value="2026"/>
</dbReference>
<dbReference type="SABIO-RK" id="P77243"/>
<dbReference type="UniPathway" id="UPA00223">
    <property type="reaction ID" value="UER00718"/>
</dbReference>
<dbReference type="UniPathway" id="UPA00946"/>
<dbReference type="EvolutionaryTrace" id="P77243"/>
<dbReference type="PRO" id="PR:P77243"/>
<dbReference type="Proteomes" id="UP000000625">
    <property type="component" value="Chromosome"/>
</dbReference>
<dbReference type="GO" id="GO:0051537">
    <property type="term" value="F:2 iron, 2 sulfur cluster binding"/>
    <property type="evidence" value="ECO:0000314"/>
    <property type="project" value="UniProtKB"/>
</dbReference>
<dbReference type="GO" id="GO:0047547">
    <property type="term" value="F:2-methylcitrate dehydratase activity"/>
    <property type="evidence" value="ECO:0000314"/>
    <property type="project" value="EcoCyc"/>
</dbReference>
<dbReference type="GO" id="GO:0003994">
    <property type="term" value="F:aconitate hydratase activity"/>
    <property type="evidence" value="ECO:0007669"/>
    <property type="project" value="UniProtKB-EC"/>
</dbReference>
<dbReference type="GO" id="GO:0019679">
    <property type="term" value="P:propionate metabolic process, methylcitrate cycle"/>
    <property type="evidence" value="ECO:0000314"/>
    <property type="project" value="EcoliWiki"/>
</dbReference>
<dbReference type="GO" id="GO:0006099">
    <property type="term" value="P:tricarboxylic acid cycle"/>
    <property type="evidence" value="ECO:0007669"/>
    <property type="project" value="UniProtKB-UniPathway"/>
</dbReference>
<dbReference type="FunFam" id="1.10.4100.10:FF:000001">
    <property type="entry name" value="2-methylcitrate dehydratase"/>
    <property type="match status" value="1"/>
</dbReference>
<dbReference type="FunFam" id="3.30.1330.120:FF:000001">
    <property type="entry name" value="2-methylcitrate dehydratase"/>
    <property type="match status" value="1"/>
</dbReference>
<dbReference type="Gene3D" id="1.10.4100.10">
    <property type="entry name" value="2-methylcitrate dehydratase PrpD"/>
    <property type="match status" value="1"/>
</dbReference>
<dbReference type="Gene3D" id="3.30.1330.120">
    <property type="entry name" value="2-methylcitrate dehydratase PrpD"/>
    <property type="match status" value="1"/>
</dbReference>
<dbReference type="InterPro" id="IPR012705">
    <property type="entry name" value="2Me_IsoCit_deHydtase_PrpD"/>
</dbReference>
<dbReference type="InterPro" id="IPR036148">
    <property type="entry name" value="MmgE/PrpD_sf"/>
</dbReference>
<dbReference type="InterPro" id="IPR042183">
    <property type="entry name" value="MmgE/PrpD_sf_1"/>
</dbReference>
<dbReference type="InterPro" id="IPR042188">
    <property type="entry name" value="MmgE/PrpD_sf_2"/>
</dbReference>
<dbReference type="InterPro" id="IPR005656">
    <property type="entry name" value="MmgE_PrpD"/>
</dbReference>
<dbReference type="InterPro" id="IPR045337">
    <property type="entry name" value="MmgE_PrpD_C"/>
</dbReference>
<dbReference type="InterPro" id="IPR045336">
    <property type="entry name" value="MmgE_PrpD_N"/>
</dbReference>
<dbReference type="NCBIfam" id="NF006943">
    <property type="entry name" value="PRK09425.1"/>
    <property type="match status" value="1"/>
</dbReference>
<dbReference type="NCBIfam" id="TIGR02330">
    <property type="entry name" value="prpD"/>
    <property type="match status" value="1"/>
</dbReference>
<dbReference type="PANTHER" id="PTHR16943:SF8">
    <property type="entry name" value="2-METHYLCITRATE DEHYDRATASE"/>
    <property type="match status" value="1"/>
</dbReference>
<dbReference type="PANTHER" id="PTHR16943">
    <property type="entry name" value="2-METHYLCITRATE DEHYDRATASE-RELATED"/>
    <property type="match status" value="1"/>
</dbReference>
<dbReference type="Pfam" id="PF19305">
    <property type="entry name" value="MmgE_PrpD_C"/>
    <property type="match status" value="1"/>
</dbReference>
<dbReference type="Pfam" id="PF03972">
    <property type="entry name" value="MmgE_PrpD_N"/>
    <property type="match status" value="1"/>
</dbReference>
<dbReference type="SUPFAM" id="SSF103378">
    <property type="entry name" value="2-methylcitrate dehydratase PrpD"/>
    <property type="match status" value="1"/>
</dbReference>
<sequence>MSAQINNIRPEFDREIVDIVDYVMNYEISSKVAYDTAHYCLLDTLGCGLEALEYPACKKLLGPIVPGTVVPNGVRVPGTQFQLDPVQAAFNIGAMIRWLDFNDTWLAAEWGHPSDNLGGILATADWLSRNAVASGKAPLTMKQVLTAMIKAHEIQGCIALENSFNRVGLDHVLLVKVASTAVVAEMLGLTREEILNAVSLAWVDGQSLRTYRHAPNTGTRKSWAAGDATSRAVRLALMAKTGEMGYPSALTAPVWGFYDVSFKGESFRFQRPYGSYVMENVLFKISFPAEFHSQTAVEAAMTLYEQMQAAGKTAADIEKVTIRTHEACIRIIDKKGPLNNPADRDHCIQYMVAIPLLFGRLTAADYEDNVAQDKRIDALREKINCFEDPAFTADYHDPEKRAIANAITLEFTDGTRFEEVVVEYPIGHARRRQDGIPKLVDKFKINLARQFPTRQQQRILEVSLDRARLEQMPVNEYLDLYVI</sequence>
<keyword id="KW-0002">3D-structure</keyword>
<keyword id="KW-0903">Direct protein sequencing</keyword>
<keyword id="KW-0456">Lyase</keyword>
<keyword id="KW-1185">Reference proteome</keyword>
<keyword id="KW-0816">Tricarboxylic acid cycle</keyword>
<comment type="function">
    <text evidence="1 2">Involved in the catabolism of short chain fatty acids (SCFA) via the tricarboxylic acid (TCA)(acetyl degradation route) and via the 2-methylcitrate cycle I (propionate degradation route). Catalyzes the dehydration of 2-methylcitrate (2-MC) to yield the cis isomer of 2-methyl-aconitate. It is also able to catalyze the dehydration of citrate and the hydration of cis-aconitate at a lower rate. Due to its broad substrate specificity, it seems to be responsible for the residual aconitase activity of the acnAB-null mutant.</text>
</comment>
<comment type="catalytic activity">
    <reaction evidence="1 2">
        <text>(2S,3S)-2-methylcitrate = 2-methyl-cis-aconitate + H2O</text>
        <dbReference type="Rhea" id="RHEA:17725"/>
        <dbReference type="ChEBI" id="CHEBI:15377"/>
        <dbReference type="ChEBI" id="CHEBI:57872"/>
        <dbReference type="ChEBI" id="CHEBI:58853"/>
        <dbReference type="EC" id="4.2.1.79"/>
    </reaction>
</comment>
<comment type="catalytic activity">
    <reaction evidence="1 2">
        <text>citrate = D-threo-isocitrate</text>
        <dbReference type="Rhea" id="RHEA:10336"/>
        <dbReference type="ChEBI" id="CHEBI:15562"/>
        <dbReference type="ChEBI" id="CHEBI:16947"/>
        <dbReference type="EC" id="4.2.1.3"/>
    </reaction>
</comment>
<comment type="biophysicochemical properties">
    <kinetics>
        <KM evidence="2">0.44 mM for (2S,3S)-2-methylcitrate</KM>
    </kinetics>
</comment>
<comment type="pathway">
    <text evidence="9">Organic acid metabolism; propanoate degradation.</text>
</comment>
<comment type="pathway">
    <text evidence="9">Carbohydrate metabolism; tricarboxylic acid cycle; isocitrate from oxaloacetate: step 2/2.</text>
</comment>
<comment type="subunit">
    <text evidence="1 5">Monomer.</text>
</comment>
<comment type="induction">
    <text evidence="2 3 4">By propionate, but not acetate or glucose. Expression of prpBCDE operon is regulated by PrpR, CRP and a variety of sugars such as arabinose, galactose, glucose mannose and xylose.</text>
</comment>
<comment type="disruption phenotype">
    <text evidence="1">Cells lacking this gene abolished the residual aconitase activity of an AcnAB-null strain.</text>
</comment>
<comment type="miscellaneous">
    <text evidence="2">PrpD catalyzes an unusual syn elimination, whereas the addition of water by AcnB to cis-2-methylaconitate occurs in the usual anti manner.</text>
</comment>
<comment type="similarity">
    <text evidence="8">Belongs to the PrpD family.</text>
</comment>
<comment type="caution">
    <text evidence="9 10">There is uncertainty concerning the 2-methylcitrate stereochemistry. Brock et al. report a (2S,3S) stereochemistry, but Reddick et al. determined that the 2-methylcitrate has either (2S,3R) or (2R,3S) stereochemistry.</text>
</comment>
<reference key="1">
    <citation type="submission" date="1997-01" db="EMBL/GenBank/DDBJ databases">
        <title>Sequence of minutes 4-25 of Escherichia coli.</title>
        <authorList>
            <person name="Chung E."/>
            <person name="Allen E."/>
            <person name="Araujo R."/>
            <person name="Aparicio A.M."/>
            <person name="Davis K."/>
            <person name="Duncan M."/>
            <person name="Federspiel N."/>
            <person name="Hyman R."/>
            <person name="Kalman S."/>
            <person name="Komp C."/>
            <person name="Kurdi O."/>
            <person name="Lew H."/>
            <person name="Lin D."/>
            <person name="Namath A."/>
            <person name="Oefner P."/>
            <person name="Roberts D."/>
            <person name="Schramm S."/>
            <person name="Davis R.W."/>
        </authorList>
    </citation>
    <scope>NUCLEOTIDE SEQUENCE [LARGE SCALE GENOMIC DNA]</scope>
    <source>
        <strain>K12 / MG1655 / ATCC 47076</strain>
    </source>
</reference>
<reference key="2">
    <citation type="journal article" date="1997" name="Science">
        <title>The complete genome sequence of Escherichia coli K-12.</title>
        <authorList>
            <person name="Blattner F.R."/>
            <person name="Plunkett G. III"/>
            <person name="Bloch C.A."/>
            <person name="Perna N.T."/>
            <person name="Burland V."/>
            <person name="Riley M."/>
            <person name="Collado-Vides J."/>
            <person name="Glasner J.D."/>
            <person name="Rode C.K."/>
            <person name="Mayhew G.F."/>
            <person name="Gregor J."/>
            <person name="Davis N.W."/>
            <person name="Kirkpatrick H.A."/>
            <person name="Goeden M.A."/>
            <person name="Rose D.J."/>
            <person name="Mau B."/>
            <person name="Shao Y."/>
        </authorList>
    </citation>
    <scope>NUCLEOTIDE SEQUENCE [LARGE SCALE GENOMIC DNA]</scope>
    <source>
        <strain>K12 / MG1655 / ATCC 47076</strain>
    </source>
</reference>
<reference key="3">
    <citation type="journal article" date="2006" name="Mol. Syst. Biol.">
        <title>Highly accurate genome sequences of Escherichia coli K-12 strains MG1655 and W3110.</title>
        <authorList>
            <person name="Hayashi K."/>
            <person name="Morooka N."/>
            <person name="Yamamoto Y."/>
            <person name="Fujita K."/>
            <person name="Isono K."/>
            <person name="Choi S."/>
            <person name="Ohtsubo E."/>
            <person name="Baba T."/>
            <person name="Wanner B.L."/>
            <person name="Mori H."/>
            <person name="Horiuchi T."/>
        </authorList>
    </citation>
    <scope>NUCLEOTIDE SEQUENCE [LARGE SCALE GENOMIC DNA]</scope>
    <source>
        <strain>K12 / W3110 / ATCC 27325 / DSM 5911</strain>
    </source>
</reference>
<reference key="4">
    <citation type="journal article" date="2002" name="Microbiology">
        <title>AcnC of Escherichia coli is a 2-methylcitrate dehydratase (PrpD) that can use citrate and isocitrate as substrates.</title>
        <authorList>
            <person name="Blank L."/>
            <person name="Green J."/>
            <person name="Guest J.R."/>
        </authorList>
    </citation>
    <scope>PROTEIN SEQUENCE OF 2-13</scope>
    <scope>FUNCTION</scope>
    <scope>CATALYTIC ACTIVITY</scope>
    <scope>DISRUPTION PHENOTYPE</scope>
    <scope>SUBSTRATE SPECIFICITY</scope>
    <scope>SUBUNIT</scope>
    <source>
        <strain>K12 / W3110 / ATCC 27325 / DSM 5911</strain>
    </source>
</reference>
<reference key="5">
    <citation type="journal article" date="2002" name="Eur. J. Biochem.">
        <title>Oxidation of propionate to pyruvate in Escherichia coli. Involvement of methylcitrate dehydratase and aconitase.</title>
        <authorList>
            <person name="Brock M."/>
            <person name="Maerker C."/>
            <person name="Schuetz A."/>
            <person name="Voelker U."/>
            <person name="Buckel W."/>
        </authorList>
    </citation>
    <scope>FUNCTION</scope>
    <scope>CATALYTIC ACTIVITY</scope>
    <scope>BIOPHYSICOCHEMICAL PROPERTIES</scope>
    <scope>INDUCTION</scope>
    <scope>SUBSTRATE SPECIFICITY</scope>
    <scope>REACTION MECHANISM</scope>
    <source>
        <strain>K12</strain>
    </source>
</reference>
<reference key="6">
    <citation type="journal article" date="2005" name="J. Bacteriol.">
        <title>Catabolite repression of the propionate catabolic genes in Escherichia coli and Salmonella enterica: evidence for involvement of the cyclic AMP receptor protein.</title>
        <authorList>
            <person name="Lee S.K."/>
            <person name="Newman J.D."/>
            <person name="Keasling J.D."/>
        </authorList>
    </citation>
    <scope>INDUCTION</scope>
    <source>
        <strain>K12</strain>
    </source>
</reference>
<reference key="7">
    <citation type="journal article" date="2012" name="Gene">
        <title>The mechanism of sugar-mediated catabolite repression of the propionate catabolic genes in Escherichia coli.</title>
        <authorList>
            <person name="Park J.M."/>
            <person name="Vinuselvi P."/>
            <person name="Lee S.K."/>
        </authorList>
    </citation>
    <scope>INDUCTION</scope>
    <source>
        <strain>K12</strain>
    </source>
</reference>
<reference key="8">
    <citation type="journal article" date="2017" name="Biochemistry">
        <title>First biochemical characterization of a methylcitric acid cycle from Bacillus subtilis strain 168.</title>
        <authorList>
            <person name="Reddick J.J."/>
            <person name="Sirkisoon S."/>
            <person name="Dahal R.A."/>
            <person name="Hardesty G."/>
            <person name="Hage N.E."/>
            <person name="Booth W.T."/>
            <person name="Quattlebaum A.L."/>
            <person name="Mills S.N."/>
            <person name="Meadows V.G."/>
            <person name="Adams S.L.H."/>
            <person name="Doyle J.S."/>
            <person name="Kiel B.E."/>
        </authorList>
    </citation>
    <scope>FUNCTION</scope>
    <scope>DISCUSSION OF STEREOCHEMISTRY</scope>
</reference>
<reference key="9">
    <citation type="submission" date="2009-02" db="PDB data bank">
        <title>Crystal structure of 2-methylcitrate dehydratase.</title>
        <authorList>
            <consortium name="New York structural genomix research consortium (NYSGXRC)"/>
        </authorList>
    </citation>
    <scope>X-RAY CRYSTALLOGRAPHY (2.7 ANGSTROMS)</scope>
    <scope>SUBUNIT</scope>
    <source>
        <strain>K12</strain>
    </source>
</reference>
<name>PRPD_ECOLI</name>
<organism>
    <name type="scientific">Escherichia coli (strain K12)</name>
    <dbReference type="NCBI Taxonomy" id="83333"/>
    <lineage>
        <taxon>Bacteria</taxon>
        <taxon>Pseudomonadati</taxon>
        <taxon>Pseudomonadota</taxon>
        <taxon>Gammaproteobacteria</taxon>
        <taxon>Enterobacterales</taxon>
        <taxon>Enterobacteriaceae</taxon>
        <taxon>Escherichia</taxon>
    </lineage>
</organism>
<protein>
    <recommendedName>
        <fullName evidence="6">2-methylcitrate dehydratase</fullName>
        <shortName evidence="7">2-MC dehydratase</shortName>
        <ecNumber evidence="1 2">4.2.1.79</ecNumber>
    </recommendedName>
    <alternativeName>
        <fullName evidence="9">(2S,3S)-2-methylcitrate dehydratase</fullName>
    </alternativeName>
    <alternativeName>
        <fullName evidence="6">Aconitate hydratase</fullName>
        <shortName evidence="6">ACN</shortName>
        <shortName evidence="6">Aconitase</shortName>
        <ecNumber evidence="1 2">4.2.1.3</ecNumber>
    </alternativeName>
</protein>
<gene>
    <name evidence="6" type="primary">prpD</name>
    <name type="synonym">yahT</name>
    <name type="ordered locus">b0334</name>
    <name type="ordered locus">JW0325</name>
</gene>
<feature type="initiator methionine" description="Removed" evidence="1">
    <location>
        <position position="1"/>
    </location>
</feature>
<feature type="chain" id="PRO_0000215023" description="2-methylcitrate dehydratase">
    <location>
        <begin position="2"/>
        <end position="483"/>
    </location>
</feature>
<feature type="helix" evidence="11">
    <location>
        <begin position="14"/>
        <end position="25"/>
    </location>
</feature>
<feature type="helix" evidence="11">
    <location>
        <begin position="31"/>
        <end position="51"/>
    </location>
</feature>
<feature type="helix" evidence="11">
    <location>
        <begin position="55"/>
        <end position="58"/>
    </location>
</feature>
<feature type="helix" evidence="11">
    <location>
        <begin position="85"/>
        <end position="98"/>
    </location>
</feature>
<feature type="strand" evidence="11">
    <location>
        <begin position="107"/>
        <end position="109"/>
    </location>
</feature>
<feature type="helix" evidence="11">
    <location>
        <begin position="113"/>
        <end position="116"/>
    </location>
</feature>
<feature type="helix" evidence="11">
    <location>
        <begin position="117"/>
        <end position="133"/>
    </location>
</feature>
<feature type="helix" evidence="11">
    <location>
        <begin position="141"/>
        <end position="158"/>
    </location>
</feature>
<feature type="turn" evidence="11">
    <location>
        <begin position="159"/>
        <end position="161"/>
    </location>
</feature>
<feature type="helix" evidence="11">
    <location>
        <begin position="165"/>
        <end position="167"/>
    </location>
</feature>
<feature type="helix" evidence="11">
    <location>
        <begin position="172"/>
        <end position="186"/>
    </location>
</feature>
<feature type="helix" evidence="11">
    <location>
        <begin position="191"/>
        <end position="202"/>
    </location>
</feature>
<feature type="helix" evidence="11">
    <location>
        <begin position="210"/>
        <end position="212"/>
    </location>
</feature>
<feature type="helix" evidence="11">
    <location>
        <begin position="220"/>
        <end position="240"/>
    </location>
</feature>
<feature type="turn" evidence="11">
    <location>
        <begin position="247"/>
        <end position="251"/>
    </location>
</feature>
<feature type="turn" evidence="11">
    <location>
        <begin position="253"/>
        <end position="255"/>
    </location>
</feature>
<feature type="helix" evidence="11">
    <location>
        <begin position="257"/>
        <end position="261"/>
    </location>
</feature>
<feature type="strand" evidence="11">
    <location>
        <begin position="273"/>
        <end position="275"/>
    </location>
</feature>
<feature type="helix" evidence="11">
    <location>
        <begin position="276"/>
        <end position="280"/>
    </location>
</feature>
<feature type="strand" evidence="11">
    <location>
        <begin position="286"/>
        <end position="288"/>
    </location>
</feature>
<feature type="turn" evidence="11">
    <location>
        <begin position="291"/>
        <end position="293"/>
    </location>
</feature>
<feature type="helix" evidence="11">
    <location>
        <begin position="294"/>
        <end position="309"/>
    </location>
</feature>
<feature type="helix" evidence="11">
    <location>
        <begin position="314"/>
        <end position="316"/>
    </location>
</feature>
<feature type="strand" evidence="11">
    <location>
        <begin position="317"/>
        <end position="324"/>
    </location>
</feature>
<feature type="helix" evidence="11">
    <location>
        <begin position="326"/>
        <end position="332"/>
    </location>
</feature>
<feature type="helix" evidence="11">
    <location>
        <begin position="341"/>
        <end position="344"/>
    </location>
</feature>
<feature type="helix" evidence="11">
    <location>
        <begin position="348"/>
        <end position="358"/>
    </location>
</feature>
<feature type="helix" evidence="11">
    <location>
        <begin position="363"/>
        <end position="366"/>
    </location>
</feature>
<feature type="helix" evidence="11">
    <location>
        <begin position="368"/>
        <end position="371"/>
    </location>
</feature>
<feature type="helix" evidence="11">
    <location>
        <begin position="374"/>
        <end position="381"/>
    </location>
</feature>
<feature type="strand" evidence="11">
    <location>
        <begin position="383"/>
        <end position="387"/>
    </location>
</feature>
<feature type="helix" evidence="11">
    <location>
        <begin position="389"/>
        <end position="396"/>
    </location>
</feature>
<feature type="turn" evidence="11">
    <location>
        <begin position="398"/>
        <end position="400"/>
    </location>
</feature>
<feature type="strand" evidence="11">
    <location>
        <begin position="405"/>
        <end position="411"/>
    </location>
</feature>
<feature type="strand" evidence="11">
    <location>
        <begin position="420"/>
        <end position="422"/>
    </location>
</feature>
<feature type="helix" evidence="11">
    <location>
        <begin position="429"/>
        <end position="431"/>
    </location>
</feature>
<feature type="helix" evidence="11">
    <location>
        <begin position="432"/>
        <end position="450"/>
    </location>
</feature>
<feature type="helix" evidence="11">
    <location>
        <begin position="453"/>
        <end position="464"/>
    </location>
</feature>
<feature type="helix" evidence="11">
    <location>
        <begin position="466"/>
        <end position="471"/>
    </location>
</feature>
<feature type="helix" evidence="11">
    <location>
        <begin position="474"/>
        <end position="478"/>
    </location>
</feature>
<feature type="turn" evidence="11">
    <location>
        <begin position="479"/>
        <end position="481"/>
    </location>
</feature>
<evidence type="ECO:0000269" key="1">
    <source>
    </source>
</evidence>
<evidence type="ECO:0000269" key="2">
    <source>
    </source>
</evidence>
<evidence type="ECO:0000269" key="3">
    <source>
    </source>
</evidence>
<evidence type="ECO:0000269" key="4">
    <source>
    </source>
</evidence>
<evidence type="ECO:0000269" key="5">
    <source ref="9"/>
</evidence>
<evidence type="ECO:0000303" key="6">
    <source>
    </source>
</evidence>
<evidence type="ECO:0000303" key="7">
    <source>
    </source>
</evidence>
<evidence type="ECO:0000305" key="8"/>
<evidence type="ECO:0000305" key="9">
    <source>
    </source>
</evidence>
<evidence type="ECO:0000305" key="10">
    <source>
    </source>
</evidence>
<evidence type="ECO:0007829" key="11">
    <source>
        <dbReference type="PDB" id="1SZQ"/>
    </source>
</evidence>
<accession>P77243</accession>
<accession>Q2MC90</accession>